<dbReference type="EMBL" id="U18917">
    <property type="protein sequence ID" value="AAB64685.1"/>
    <property type="molecule type" value="Genomic_DNA"/>
</dbReference>
<dbReference type="EMBL" id="BK006939">
    <property type="protein sequence ID" value="DAA07819.1"/>
    <property type="molecule type" value="Genomic_DNA"/>
</dbReference>
<dbReference type="PIR" id="S50661">
    <property type="entry name" value="S50661"/>
</dbReference>
<dbReference type="RefSeq" id="NP_011085.1">
    <property type="nucleotide sequence ID" value="NM_001179048.1"/>
</dbReference>
<dbReference type="BioGRID" id="36909">
    <property type="interactions" value="43"/>
</dbReference>
<dbReference type="DIP" id="DIP-2686N"/>
<dbReference type="FunCoup" id="P40095">
    <property type="interactions" value="151"/>
</dbReference>
<dbReference type="IntAct" id="P40095">
    <property type="interactions" value="9"/>
</dbReference>
<dbReference type="MINT" id="P40095"/>
<dbReference type="STRING" id="4932.YER158C"/>
<dbReference type="GlyGen" id="P40095">
    <property type="glycosylation" value="9 sites"/>
</dbReference>
<dbReference type="iPTMnet" id="P40095"/>
<dbReference type="PaxDb" id="4932-YER158C"/>
<dbReference type="PeptideAtlas" id="P40095"/>
<dbReference type="EnsemblFungi" id="YER158C_mRNA">
    <property type="protein sequence ID" value="YER158C"/>
    <property type="gene ID" value="YER158C"/>
</dbReference>
<dbReference type="GeneID" id="856903"/>
<dbReference type="KEGG" id="sce:YER158C"/>
<dbReference type="AGR" id="SGD:S000000960"/>
<dbReference type="SGD" id="S000000960">
    <property type="gene designation" value="YER158C"/>
</dbReference>
<dbReference type="VEuPathDB" id="FungiDB:YER158C"/>
<dbReference type="eggNOG" id="ENOG502TFUM">
    <property type="taxonomic scope" value="Eukaryota"/>
</dbReference>
<dbReference type="HOGENOM" id="CLU_486751_0_0_1"/>
<dbReference type="InParanoid" id="P40095"/>
<dbReference type="OMA" id="VNDTWSA"/>
<dbReference type="OrthoDB" id="5563016at2759"/>
<dbReference type="BioCyc" id="YEAST:G3O-30319-MONOMER"/>
<dbReference type="Reactome" id="R-SCE-114608">
    <property type="pathway name" value="Platelet degranulation"/>
</dbReference>
<dbReference type="BioGRID-ORCS" id="856903">
    <property type="hits" value="1 hit in 10 CRISPR screens"/>
</dbReference>
<dbReference type="PRO" id="PR:P40095"/>
<dbReference type="Proteomes" id="UP000002311">
    <property type="component" value="Chromosome V"/>
</dbReference>
<dbReference type="RNAct" id="P40095">
    <property type="molecule type" value="protein"/>
</dbReference>
<dbReference type="GO" id="GO:0003779">
    <property type="term" value="F:actin binding"/>
    <property type="evidence" value="ECO:0000318"/>
    <property type="project" value="GO_Central"/>
</dbReference>
<dbReference type="GO" id="GO:0030036">
    <property type="term" value="P:actin cytoskeleton organization"/>
    <property type="evidence" value="ECO:0000318"/>
    <property type="project" value="GO_Central"/>
</dbReference>
<dbReference type="PANTHER" id="PTHR12751:SF18">
    <property type="entry name" value="PHOSPHATASE AND ACTIN REGULATOR 1"/>
    <property type="match status" value="1"/>
</dbReference>
<dbReference type="PANTHER" id="PTHR12751">
    <property type="entry name" value="PHOSPHATASE AND ACTIN REGULATOR PHACTR"/>
    <property type="match status" value="1"/>
</dbReference>
<sequence length="573" mass="63712">MLQQGSSSRRSLHGNDFHTLTSPSRRDSLSIPRAVDARSASTIDLFYIPDATVSRRHSTLVANRSDNNGNGAPMRQYNKPNFASSSTSSLPSTRNRPSRYDNMNMNMNMNMNMNMNMNMNMNNHTTSDHNAHPQYRCRPNPSRRHSLMTIPEKYSGSRYSLRSSPPTYSNPRVRKELTPFQLQRKQMKSAFQFPNGENFTPRNQIARLPPSSTFPDSPSSSSLPLTQTGGPSSADNDSIATGTNNRSPQQTKAADANQKSESESPKAIRSNSKKISRFFRKIWSSKSSNSADSVEENSKTKQKRKNPERVVPEPITSLDQPVEIIKQSFSTVNNHETAVPSIKDSGIVQELTALGDNNRIPVLPPPRSPNRPTLSDKRTTKLYYCSQDSSNEDIAPEEKSTVFLKRLQDEWSTVYLNKLPLTASVPSSLSTTTDAANSSFINSSISSPAPSSSSSSSLVSRGPMQSISSSPTPAPSSGSSKSKNAVKSLRFADEIYVNDTWSAADYCRCDNTFLNNFFKGKSQDITNPSTFVGNNLSSTKNISNIEIKMEVNEFKRKEMRVHQDSAKYTHYYL</sequence>
<proteinExistence type="evidence at protein level"/>
<comment type="interaction">
    <interactant intactId="EBI-22734">
        <id>P40095</id>
    </interactant>
    <interactant intactId="EBI-3719">
        <id>P38041</id>
        <label>BOI1</label>
    </interactant>
    <organismsDiffer>false</organismsDiffer>
    <experiments>4</experiments>
</comment>
<comment type="interaction">
    <interactant intactId="EBI-22734">
        <id>P40095</id>
    </interactant>
    <interactant intactId="EBI-3727">
        <id>P39969</id>
        <label>BOI2</label>
    </interactant>
    <organismsDiffer>false</organismsDiffer>
    <experiments>3</experiments>
</comment>
<comment type="PTM">
    <text evidence="4">N-glycosylated.</text>
</comment>
<comment type="miscellaneous">
    <text evidence="3">Present with 784 molecules/cell in log phase SD medium.</text>
</comment>
<comment type="similarity">
    <text evidence="5">To yeast AFR1.</text>
</comment>
<organism>
    <name type="scientific">Saccharomyces cerevisiae (strain ATCC 204508 / S288c)</name>
    <name type="common">Baker's yeast</name>
    <dbReference type="NCBI Taxonomy" id="559292"/>
    <lineage>
        <taxon>Eukaryota</taxon>
        <taxon>Fungi</taxon>
        <taxon>Dikarya</taxon>
        <taxon>Ascomycota</taxon>
        <taxon>Saccharomycotina</taxon>
        <taxon>Saccharomycetes</taxon>
        <taxon>Saccharomycetales</taxon>
        <taxon>Saccharomycetaceae</taxon>
        <taxon>Saccharomyces</taxon>
    </lineage>
</organism>
<evidence type="ECO:0000255" key="1"/>
<evidence type="ECO:0000256" key="2">
    <source>
        <dbReference type="SAM" id="MobiDB-lite"/>
    </source>
</evidence>
<evidence type="ECO:0000269" key="3">
    <source>
    </source>
</evidence>
<evidence type="ECO:0000269" key="4">
    <source>
    </source>
</evidence>
<evidence type="ECO:0000305" key="5"/>
<protein>
    <recommendedName>
        <fullName>Uncharacterized protein YER158C</fullName>
    </recommendedName>
</protein>
<reference key="1">
    <citation type="journal article" date="1997" name="Nature">
        <title>The nucleotide sequence of Saccharomyces cerevisiae chromosome V.</title>
        <authorList>
            <person name="Dietrich F.S."/>
            <person name="Mulligan J.T."/>
            <person name="Hennessy K.M."/>
            <person name="Yelton M.A."/>
            <person name="Allen E."/>
            <person name="Araujo R."/>
            <person name="Aviles E."/>
            <person name="Berno A."/>
            <person name="Brennan T."/>
            <person name="Carpenter J."/>
            <person name="Chen E."/>
            <person name="Cherry J.M."/>
            <person name="Chung E."/>
            <person name="Duncan M."/>
            <person name="Guzman E."/>
            <person name="Hartzell G."/>
            <person name="Hunicke-Smith S."/>
            <person name="Hyman R.W."/>
            <person name="Kayser A."/>
            <person name="Komp C."/>
            <person name="Lashkari D."/>
            <person name="Lew H."/>
            <person name="Lin D."/>
            <person name="Mosedale D."/>
            <person name="Nakahara K."/>
            <person name="Namath A."/>
            <person name="Norgren R."/>
            <person name="Oefner P."/>
            <person name="Oh C."/>
            <person name="Petel F.X."/>
            <person name="Roberts D."/>
            <person name="Sehl P."/>
            <person name="Schramm S."/>
            <person name="Shogren T."/>
            <person name="Smith V."/>
            <person name="Taylor P."/>
            <person name="Wei Y."/>
            <person name="Botstein D."/>
            <person name="Davis R.W."/>
        </authorList>
    </citation>
    <scope>NUCLEOTIDE SEQUENCE [LARGE SCALE GENOMIC DNA]</scope>
    <source>
        <strain>ATCC 204508 / S288c</strain>
    </source>
</reference>
<reference key="2">
    <citation type="journal article" date="2014" name="G3 (Bethesda)">
        <title>The reference genome sequence of Saccharomyces cerevisiae: Then and now.</title>
        <authorList>
            <person name="Engel S.R."/>
            <person name="Dietrich F.S."/>
            <person name="Fisk D.G."/>
            <person name="Binkley G."/>
            <person name="Balakrishnan R."/>
            <person name="Costanzo M.C."/>
            <person name="Dwight S.S."/>
            <person name="Hitz B.C."/>
            <person name="Karra K."/>
            <person name="Nash R.S."/>
            <person name="Weng S."/>
            <person name="Wong E.D."/>
            <person name="Lloyd P."/>
            <person name="Skrzypek M.S."/>
            <person name="Miyasato S.R."/>
            <person name="Simison M."/>
            <person name="Cherry J.M."/>
        </authorList>
    </citation>
    <scope>GENOME REANNOTATION</scope>
    <source>
        <strain>ATCC 204508 / S288c</strain>
    </source>
</reference>
<reference key="3">
    <citation type="journal article" date="2003" name="Nature">
        <title>Global analysis of protein expression in yeast.</title>
        <authorList>
            <person name="Ghaemmaghami S."/>
            <person name="Huh W.-K."/>
            <person name="Bower K."/>
            <person name="Howson R.W."/>
            <person name="Belle A."/>
            <person name="Dephoure N."/>
            <person name="O'Shea E.K."/>
            <person name="Weissman J.S."/>
        </authorList>
    </citation>
    <scope>LEVEL OF PROTEIN EXPRESSION [LARGE SCALE ANALYSIS]</scope>
</reference>
<reference key="4">
    <citation type="journal article" date="2009" name="Mol. Syst. Biol.">
        <title>Global analysis of the glycoproteome in Saccharomyces cerevisiae reveals new roles for protein glycosylation in eukaryotes.</title>
        <authorList>
            <person name="Kung L.A."/>
            <person name="Tao S.-C."/>
            <person name="Qian J."/>
            <person name="Smith M.G."/>
            <person name="Snyder M."/>
            <person name="Zhu H."/>
        </authorList>
    </citation>
    <scope>GLYCOSYLATION [LARGE SCALE ANALYSIS]</scope>
</reference>
<accession>P40095</accession>
<accession>D3DM65</accession>
<keyword id="KW-0325">Glycoprotein</keyword>
<keyword id="KW-1185">Reference proteome</keyword>
<keyword id="KW-0677">Repeat</keyword>
<gene>
    <name type="ordered locus">YER158C</name>
</gene>
<feature type="chain" id="PRO_0000202656" description="Uncharacterized protein YER158C">
    <location>
        <begin position="1"/>
        <end position="573"/>
    </location>
</feature>
<feature type="repeat" description="1">
    <location>
        <begin position="102"/>
        <end position="103"/>
    </location>
</feature>
<feature type="repeat" description="2">
    <location>
        <begin position="104"/>
        <end position="105"/>
    </location>
</feature>
<feature type="repeat" description="3">
    <location>
        <begin position="106"/>
        <end position="107"/>
    </location>
</feature>
<feature type="repeat" description="4">
    <location>
        <begin position="108"/>
        <end position="109"/>
    </location>
</feature>
<feature type="repeat" description="5">
    <location>
        <begin position="110"/>
        <end position="111"/>
    </location>
</feature>
<feature type="repeat" description="6">
    <location>
        <begin position="112"/>
        <end position="113"/>
    </location>
</feature>
<feature type="repeat" description="7">
    <location>
        <begin position="114"/>
        <end position="115"/>
    </location>
</feature>
<feature type="repeat" description="8">
    <location>
        <begin position="116"/>
        <end position="117"/>
    </location>
</feature>
<feature type="repeat" description="9">
    <location>
        <begin position="118"/>
        <end position="119"/>
    </location>
</feature>
<feature type="repeat" description="10">
    <location>
        <begin position="120"/>
        <end position="121"/>
    </location>
</feature>
<feature type="region of interest" description="Disordered" evidence="2">
    <location>
        <begin position="1"/>
        <end position="33"/>
    </location>
</feature>
<feature type="region of interest" description="Disordered" evidence="2">
    <location>
        <begin position="60"/>
        <end position="101"/>
    </location>
</feature>
<feature type="region of interest" description="10 X 2 AA tandem repeats of N-M">
    <location>
        <begin position="102"/>
        <end position="121"/>
    </location>
</feature>
<feature type="region of interest" description="Disordered" evidence="2">
    <location>
        <begin position="150"/>
        <end position="174"/>
    </location>
</feature>
<feature type="region of interest" description="Disordered" evidence="2">
    <location>
        <begin position="192"/>
        <end position="271"/>
    </location>
</feature>
<feature type="region of interest" description="Disordered" evidence="2">
    <location>
        <begin position="286"/>
        <end position="317"/>
    </location>
</feature>
<feature type="region of interest" description="Disordered" evidence="2">
    <location>
        <begin position="357"/>
        <end position="379"/>
    </location>
</feature>
<feature type="region of interest" description="Disordered" evidence="2">
    <location>
        <begin position="441"/>
        <end position="483"/>
    </location>
</feature>
<feature type="compositionally biased region" description="Polar residues" evidence="2">
    <location>
        <begin position="60"/>
        <end position="70"/>
    </location>
</feature>
<feature type="compositionally biased region" description="Low complexity" evidence="2">
    <location>
        <begin position="84"/>
        <end position="95"/>
    </location>
</feature>
<feature type="compositionally biased region" description="Polar residues" evidence="2">
    <location>
        <begin position="157"/>
        <end position="170"/>
    </location>
</feature>
<feature type="compositionally biased region" description="Low complexity" evidence="2">
    <location>
        <begin position="208"/>
        <end position="225"/>
    </location>
</feature>
<feature type="compositionally biased region" description="Polar residues" evidence="2">
    <location>
        <begin position="226"/>
        <end position="252"/>
    </location>
</feature>
<feature type="compositionally biased region" description="Low complexity" evidence="2">
    <location>
        <begin position="441"/>
        <end position="457"/>
    </location>
</feature>
<feature type="compositionally biased region" description="Low complexity" evidence="2">
    <location>
        <begin position="466"/>
        <end position="483"/>
    </location>
</feature>
<feature type="glycosylation site" description="N-linked (GlcNAc...) asparagine" evidence="1">
    <location>
        <position position="63"/>
    </location>
</feature>
<feature type="glycosylation site" description="N-linked (GlcNAc...) asparagine" evidence="1">
    <location>
        <position position="123"/>
    </location>
</feature>
<feature type="glycosylation site" description="N-linked (GlcNAc...) asparagine" evidence="1">
    <location>
        <position position="236"/>
    </location>
</feature>
<feature type="glycosylation site" description="N-linked (GlcNAc...) asparagine" evidence="1">
    <location>
        <position position="437"/>
    </location>
</feature>
<feature type="glycosylation site" description="N-linked (GlcNAc...) asparagine" evidence="1">
    <location>
        <position position="442"/>
    </location>
</feature>
<feature type="glycosylation site" description="N-linked (GlcNAc...) asparagine" evidence="1">
    <location>
        <position position="498"/>
    </location>
</feature>
<feature type="glycosylation site" description="N-linked (GlcNAc...) asparagine" evidence="1">
    <location>
        <position position="535"/>
    </location>
</feature>
<feature type="glycosylation site" description="N-linked (GlcNAc...) asparagine" evidence="1">
    <location>
        <position position="541"/>
    </location>
</feature>
<name>YEY8_YEAST</name>